<comment type="function">
    <text evidence="1">Involved in transcription antitermination. Required for transcription of ribosomal RNA (rRNA) genes. Binds specifically to the boxA antiterminator sequence of the ribosomal RNA (rrn) operons.</text>
</comment>
<comment type="similarity">
    <text evidence="1">Belongs to the NusB family.</text>
</comment>
<protein>
    <recommendedName>
        <fullName evidence="1">Transcription antitermination protein NusB</fullName>
    </recommendedName>
    <alternativeName>
        <fullName evidence="1">Antitermination factor NusB</fullName>
    </alternativeName>
</protein>
<gene>
    <name evidence="1" type="primary">nusB</name>
    <name type="ordered locus">Glov_1215</name>
</gene>
<sequence length="142" mass="16276">MGLRREARELALQMLYAQDTLQGSLRDTLRGFREGVETGERTREFAEALVQGVMEHREAIDQAIVARSKNWALSRMPRVDLNIMRMAAYELMFKRDIPKKVSINEAIEIAKKYGDKESPAFVNGILDELEACPKDEERSDTE</sequence>
<accession>B3E757</accession>
<proteinExistence type="inferred from homology"/>
<name>NUSB_TRIL1</name>
<reference key="1">
    <citation type="submission" date="2008-05" db="EMBL/GenBank/DDBJ databases">
        <title>Complete sequence of chromosome of Geobacter lovleyi SZ.</title>
        <authorList>
            <consortium name="US DOE Joint Genome Institute"/>
            <person name="Lucas S."/>
            <person name="Copeland A."/>
            <person name="Lapidus A."/>
            <person name="Glavina del Rio T."/>
            <person name="Dalin E."/>
            <person name="Tice H."/>
            <person name="Bruce D."/>
            <person name="Goodwin L."/>
            <person name="Pitluck S."/>
            <person name="Chertkov O."/>
            <person name="Meincke L."/>
            <person name="Brettin T."/>
            <person name="Detter J.C."/>
            <person name="Han C."/>
            <person name="Tapia R."/>
            <person name="Kuske C.R."/>
            <person name="Schmutz J."/>
            <person name="Larimer F."/>
            <person name="Land M."/>
            <person name="Hauser L."/>
            <person name="Kyrpides N."/>
            <person name="Mikhailova N."/>
            <person name="Sung Y."/>
            <person name="Fletcher K.E."/>
            <person name="Ritalahti K.M."/>
            <person name="Loeffler F.E."/>
            <person name="Richardson P."/>
        </authorList>
    </citation>
    <scope>NUCLEOTIDE SEQUENCE [LARGE SCALE GENOMIC DNA]</scope>
    <source>
        <strain>ATCC BAA-1151 / DSM 17278 / SZ</strain>
    </source>
</reference>
<organism>
    <name type="scientific">Trichlorobacter lovleyi (strain ATCC BAA-1151 / DSM 17278 / SZ)</name>
    <name type="common">Geobacter lovleyi</name>
    <dbReference type="NCBI Taxonomy" id="398767"/>
    <lineage>
        <taxon>Bacteria</taxon>
        <taxon>Pseudomonadati</taxon>
        <taxon>Thermodesulfobacteriota</taxon>
        <taxon>Desulfuromonadia</taxon>
        <taxon>Geobacterales</taxon>
        <taxon>Geobacteraceae</taxon>
        <taxon>Trichlorobacter</taxon>
    </lineage>
</organism>
<dbReference type="EMBL" id="CP001089">
    <property type="protein sequence ID" value="ACD94937.1"/>
    <property type="molecule type" value="Genomic_DNA"/>
</dbReference>
<dbReference type="RefSeq" id="WP_012469285.1">
    <property type="nucleotide sequence ID" value="NC_010814.1"/>
</dbReference>
<dbReference type="SMR" id="B3E757"/>
<dbReference type="STRING" id="398767.Glov_1215"/>
<dbReference type="KEGG" id="glo:Glov_1215"/>
<dbReference type="eggNOG" id="COG0781">
    <property type="taxonomic scope" value="Bacteria"/>
</dbReference>
<dbReference type="HOGENOM" id="CLU_087843_3_3_7"/>
<dbReference type="OrthoDB" id="9797817at2"/>
<dbReference type="Proteomes" id="UP000002420">
    <property type="component" value="Chromosome"/>
</dbReference>
<dbReference type="GO" id="GO:0005829">
    <property type="term" value="C:cytosol"/>
    <property type="evidence" value="ECO:0007669"/>
    <property type="project" value="TreeGrafter"/>
</dbReference>
<dbReference type="GO" id="GO:0003723">
    <property type="term" value="F:RNA binding"/>
    <property type="evidence" value="ECO:0007669"/>
    <property type="project" value="UniProtKB-UniRule"/>
</dbReference>
<dbReference type="GO" id="GO:0006353">
    <property type="term" value="P:DNA-templated transcription termination"/>
    <property type="evidence" value="ECO:0007669"/>
    <property type="project" value="UniProtKB-UniRule"/>
</dbReference>
<dbReference type="GO" id="GO:0031564">
    <property type="term" value="P:transcription antitermination"/>
    <property type="evidence" value="ECO:0007669"/>
    <property type="project" value="UniProtKB-KW"/>
</dbReference>
<dbReference type="CDD" id="cd00619">
    <property type="entry name" value="Terminator_NusB"/>
    <property type="match status" value="1"/>
</dbReference>
<dbReference type="Gene3D" id="1.10.940.10">
    <property type="entry name" value="NusB-like"/>
    <property type="match status" value="1"/>
</dbReference>
<dbReference type="HAMAP" id="MF_00073">
    <property type="entry name" value="NusB"/>
    <property type="match status" value="1"/>
</dbReference>
<dbReference type="InterPro" id="IPR035926">
    <property type="entry name" value="NusB-like_sf"/>
</dbReference>
<dbReference type="InterPro" id="IPR011605">
    <property type="entry name" value="NusB_fam"/>
</dbReference>
<dbReference type="InterPro" id="IPR006027">
    <property type="entry name" value="NusB_RsmB_TIM44"/>
</dbReference>
<dbReference type="NCBIfam" id="TIGR01951">
    <property type="entry name" value="nusB"/>
    <property type="match status" value="1"/>
</dbReference>
<dbReference type="PANTHER" id="PTHR11078:SF3">
    <property type="entry name" value="ANTITERMINATION NUSB DOMAIN-CONTAINING PROTEIN"/>
    <property type="match status" value="1"/>
</dbReference>
<dbReference type="PANTHER" id="PTHR11078">
    <property type="entry name" value="N UTILIZATION SUBSTANCE PROTEIN B-RELATED"/>
    <property type="match status" value="1"/>
</dbReference>
<dbReference type="Pfam" id="PF01029">
    <property type="entry name" value="NusB"/>
    <property type="match status" value="1"/>
</dbReference>
<dbReference type="SUPFAM" id="SSF48013">
    <property type="entry name" value="NusB-like"/>
    <property type="match status" value="1"/>
</dbReference>
<feature type="chain" id="PRO_1000092555" description="Transcription antitermination protein NusB">
    <location>
        <begin position="1"/>
        <end position="142"/>
    </location>
</feature>
<keyword id="KW-1185">Reference proteome</keyword>
<keyword id="KW-0694">RNA-binding</keyword>
<keyword id="KW-0804">Transcription</keyword>
<keyword id="KW-0889">Transcription antitermination</keyword>
<keyword id="KW-0805">Transcription regulation</keyword>
<evidence type="ECO:0000255" key="1">
    <source>
        <dbReference type="HAMAP-Rule" id="MF_00073"/>
    </source>
</evidence>